<sequence length="500" mass="56402">MTLTATMVVDKSFKIGEIDKRIYGSFIEHLGRAVYEGIYEPGHPDGDEQGFRKDVIRLVQELQVPLVRYPGGNFVSGYNWEDGVGPVSERPKRLDLAWRTTETNEIGTNEFVDWAKKVGAEVNMAVNLGSRGVDAARNLVEYCNHPSGSYWSDLRISHGYKDPHNIKTWCLGNEMDGPWQIGQKTAEEYGRVAAEAGKVMKLVDPSIELVACGSSNSKMATFADWEATVLDHTYDYVDYISLHTYYGNRDDDLANYLAQSMDMDEFIRSVIAIADYVKAKKRSKKTIHLSFDEWNVWFHSNEADRQITPWSVAPPLLEDIYTFEDALLVGSMLITLLKHADRVKIACLAQLVNVIAPIMTEKGGPAWKQTIFYPYMHASVYGRGVALQAQISSPKYDSKDFTDVPYLDAAVVHLEEAEEVTIFAVNKHQTESLNLQCDMRSFEGYHVLEHIVLEHENMKATNQGREQVTPHHNGDSAIDQGRLTANLAKLSWNVIRLGKK</sequence>
<keyword id="KW-0119">Carbohydrate metabolism</keyword>
<keyword id="KW-0963">Cytoplasm</keyword>
<keyword id="KW-0326">Glycosidase</keyword>
<keyword id="KW-0378">Hydrolase</keyword>
<keyword id="KW-1185">Reference proteome</keyword>
<protein>
    <recommendedName>
        <fullName evidence="2">Intracellular exo-alpha-(1-&gt;5)-L-arabinofuranosidase</fullName>
        <shortName evidence="2">ABF</shortName>
        <ecNumber evidence="2">3.2.1.55</ecNumber>
    </recommendedName>
    <alternativeName>
        <fullName evidence="2">Intracellular arabinan exo-alpha-(1-&gt;5)-L-arabinosidase</fullName>
        <shortName evidence="2">Arabinosidase</shortName>
    </alternativeName>
</protein>
<accession>Q9KBR4</accession>
<dbReference type="EC" id="3.2.1.55" evidence="2"/>
<dbReference type="EMBL" id="BA000004">
    <property type="protein sequence ID" value="BAB05580.1"/>
    <property type="molecule type" value="Genomic_DNA"/>
</dbReference>
<dbReference type="PIR" id="E83882">
    <property type="entry name" value="E83882"/>
</dbReference>
<dbReference type="RefSeq" id="WP_010898022.1">
    <property type="nucleotide sequence ID" value="NC_002570.2"/>
</dbReference>
<dbReference type="SMR" id="Q9KBR4"/>
<dbReference type="STRING" id="272558.gene:10727759"/>
<dbReference type="CAZy" id="GH51">
    <property type="family name" value="Glycoside Hydrolase Family 51"/>
</dbReference>
<dbReference type="GeneID" id="87597457"/>
<dbReference type="KEGG" id="bha:BH1861"/>
<dbReference type="eggNOG" id="COG3534">
    <property type="taxonomic scope" value="Bacteria"/>
</dbReference>
<dbReference type="HOGENOM" id="CLU_017810_1_1_9"/>
<dbReference type="OrthoDB" id="9758333at2"/>
<dbReference type="UniPathway" id="UPA00667"/>
<dbReference type="Proteomes" id="UP000001258">
    <property type="component" value="Chromosome"/>
</dbReference>
<dbReference type="GO" id="GO:0005737">
    <property type="term" value="C:cytoplasm"/>
    <property type="evidence" value="ECO:0007669"/>
    <property type="project" value="UniProtKB-SubCell"/>
</dbReference>
<dbReference type="GO" id="GO:0046556">
    <property type="term" value="F:alpha-L-arabinofuranosidase activity"/>
    <property type="evidence" value="ECO:0007669"/>
    <property type="project" value="UniProtKB-EC"/>
</dbReference>
<dbReference type="GO" id="GO:0031222">
    <property type="term" value="P:arabinan catabolic process"/>
    <property type="evidence" value="ECO:0007669"/>
    <property type="project" value="UniProtKB-UniPathway"/>
</dbReference>
<dbReference type="GO" id="GO:0046373">
    <property type="term" value="P:L-arabinose metabolic process"/>
    <property type="evidence" value="ECO:0007669"/>
    <property type="project" value="InterPro"/>
</dbReference>
<dbReference type="Gene3D" id="3.20.20.80">
    <property type="entry name" value="Glycosidases"/>
    <property type="match status" value="1"/>
</dbReference>
<dbReference type="Gene3D" id="2.60.40.1180">
    <property type="entry name" value="Golgi alpha-mannosidase II"/>
    <property type="match status" value="1"/>
</dbReference>
<dbReference type="InterPro" id="IPR010720">
    <property type="entry name" value="Alpha-L-AF_C"/>
</dbReference>
<dbReference type="InterPro" id="IPR013780">
    <property type="entry name" value="Glyco_hydro_b"/>
</dbReference>
<dbReference type="InterPro" id="IPR017853">
    <property type="entry name" value="Glycoside_hydrolase_SF"/>
</dbReference>
<dbReference type="PANTHER" id="PTHR43576:SF3">
    <property type="entry name" value="ALPHA-L-ARABINOFURANOSIDASE C"/>
    <property type="match status" value="1"/>
</dbReference>
<dbReference type="PANTHER" id="PTHR43576">
    <property type="entry name" value="ALPHA-L-ARABINOFURANOSIDASE C-RELATED"/>
    <property type="match status" value="1"/>
</dbReference>
<dbReference type="Pfam" id="PF06964">
    <property type="entry name" value="Alpha-L-AF_C"/>
    <property type="match status" value="1"/>
</dbReference>
<dbReference type="SMART" id="SM00813">
    <property type="entry name" value="Alpha-L-AF_C"/>
    <property type="match status" value="1"/>
</dbReference>
<dbReference type="SUPFAM" id="SSF51445">
    <property type="entry name" value="(Trans)glycosidases"/>
    <property type="match status" value="1"/>
</dbReference>
<dbReference type="SUPFAM" id="SSF51011">
    <property type="entry name" value="Glycosyl hydrolase domain"/>
    <property type="match status" value="1"/>
</dbReference>
<name>IABF_HALH5</name>
<feature type="chain" id="PRO_0000057699" description="Intracellular exo-alpha-(1-&gt;5)-L-arabinofuranosidase">
    <location>
        <begin position="1"/>
        <end position="500"/>
    </location>
</feature>
<feature type="active site" description="Proton donor/acceptor" evidence="2">
    <location>
        <position position="174"/>
    </location>
</feature>
<feature type="active site" description="Nucleophile" evidence="2">
    <location>
        <position position="293"/>
    </location>
</feature>
<feature type="binding site" evidence="2">
    <location>
        <position position="28"/>
    </location>
    <ligand>
        <name>alpha-L-arabinofuranose</name>
        <dbReference type="ChEBI" id="CHEBI:28772"/>
    </ligand>
</feature>
<feature type="binding site" evidence="2">
    <location>
        <position position="73"/>
    </location>
    <ligand>
        <name>alpha-L-arabinofuranose</name>
        <dbReference type="ChEBI" id="CHEBI:28772"/>
    </ligand>
</feature>
<feature type="binding site" evidence="2">
    <location>
        <position position="173"/>
    </location>
    <ligand>
        <name>alpha-L-arabinofuranose</name>
        <dbReference type="ChEBI" id="CHEBI:28772"/>
    </ligand>
</feature>
<feature type="binding site" evidence="2">
    <location>
        <position position="245"/>
    </location>
    <ligand>
        <name>alpha-L-arabinofuranose</name>
        <dbReference type="ChEBI" id="CHEBI:28772"/>
    </ligand>
</feature>
<feature type="binding site" description="covalent" evidence="2">
    <location>
        <position position="293"/>
    </location>
    <ligand>
        <name>alpha-L-arabinofuranose</name>
        <dbReference type="ChEBI" id="CHEBI:28772"/>
    </ligand>
</feature>
<feature type="binding site" evidence="2">
    <location>
        <position position="350"/>
    </location>
    <ligand>
        <name>alpha-L-arabinofuranose</name>
        <dbReference type="ChEBI" id="CHEBI:28772"/>
    </ligand>
</feature>
<feature type="site" description="Important for substrate recognition" evidence="2">
    <location>
        <position position="297"/>
    </location>
</feature>
<feature type="site" description="Important for substrate recognition" evidence="2">
    <location>
        <position position="350"/>
    </location>
</feature>
<organism>
    <name type="scientific">Halalkalibacterium halodurans (strain ATCC BAA-125 / DSM 18197 / FERM 7344 / JCM 9153 / C-125)</name>
    <name type="common">Bacillus halodurans</name>
    <dbReference type="NCBI Taxonomy" id="272558"/>
    <lineage>
        <taxon>Bacteria</taxon>
        <taxon>Bacillati</taxon>
        <taxon>Bacillota</taxon>
        <taxon>Bacilli</taxon>
        <taxon>Bacillales</taxon>
        <taxon>Bacillaceae</taxon>
        <taxon>Halalkalibacterium (ex Joshi et al. 2022)</taxon>
    </lineage>
</organism>
<gene>
    <name type="primary">abfA</name>
    <name type="ordered locus">BH1861</name>
</gene>
<reference key="1">
    <citation type="journal article" date="2000" name="Nucleic Acids Res.">
        <title>Complete genome sequence of the alkaliphilic bacterium Bacillus halodurans and genomic sequence comparison with Bacillus subtilis.</title>
        <authorList>
            <person name="Takami H."/>
            <person name="Nakasone K."/>
            <person name="Takaki Y."/>
            <person name="Maeno G."/>
            <person name="Sasaki R."/>
            <person name="Masui N."/>
            <person name="Fuji F."/>
            <person name="Hirama C."/>
            <person name="Nakamura Y."/>
            <person name="Ogasawara N."/>
            <person name="Kuhara S."/>
            <person name="Horikoshi K."/>
        </authorList>
    </citation>
    <scope>NUCLEOTIDE SEQUENCE [LARGE SCALE GENOMIC DNA]</scope>
    <source>
        <strain>ATCC BAA-125 / DSM 18197 / FERM 7344 / JCM 9153 / C-125</strain>
    </source>
</reference>
<proteinExistence type="inferred from homology"/>
<comment type="function">
    <text evidence="2">Involved in the degradation of arabinan and is a key enzyme in the complete degradation of the plant cell wall. Catalyzes the cleavage of terminal alpha-(1-&gt;5)-arabinofuranosyl bonds in different hemicellulosic homopolysaccharides (branched and debranched arabinans).</text>
</comment>
<comment type="catalytic activity">
    <reaction evidence="2">
        <text>Hydrolysis of terminal non-reducing alpha-L-arabinofuranoside residues in alpha-L-arabinosides.</text>
        <dbReference type="EC" id="3.2.1.55"/>
    </reaction>
</comment>
<comment type="pathway">
    <text evidence="2">Glycan metabolism; L-arabinan degradation.</text>
</comment>
<comment type="subunit">
    <text evidence="2">Homohexamer; trimer of dimers.</text>
</comment>
<comment type="subcellular location">
    <subcellularLocation>
        <location evidence="1">Cytoplasm</location>
    </subcellularLocation>
</comment>
<comment type="similarity">
    <text evidence="3">Belongs to the glycosyl hydrolase 51 family.</text>
</comment>
<evidence type="ECO:0000250" key="1">
    <source>
        <dbReference type="UniProtKB" id="P94531"/>
    </source>
</evidence>
<evidence type="ECO:0000250" key="2">
    <source>
        <dbReference type="UniProtKB" id="Q9XBQ3"/>
    </source>
</evidence>
<evidence type="ECO:0000305" key="3"/>